<name>SYI_STRM5</name>
<comment type="function">
    <text evidence="1">Catalyzes the attachment of isoleucine to tRNA(Ile). As IleRS can inadvertently accommodate and process structurally similar amino acids such as valine, to avoid such errors it has two additional distinct tRNA(Ile)-dependent editing activities. One activity is designated as 'pretransfer' editing and involves the hydrolysis of activated Val-AMP. The other activity is designated 'posttransfer' editing and involves deacylation of mischarged Val-tRNA(Ile).</text>
</comment>
<comment type="catalytic activity">
    <reaction evidence="1">
        <text>tRNA(Ile) + L-isoleucine + ATP = L-isoleucyl-tRNA(Ile) + AMP + diphosphate</text>
        <dbReference type="Rhea" id="RHEA:11060"/>
        <dbReference type="Rhea" id="RHEA-COMP:9666"/>
        <dbReference type="Rhea" id="RHEA-COMP:9695"/>
        <dbReference type="ChEBI" id="CHEBI:30616"/>
        <dbReference type="ChEBI" id="CHEBI:33019"/>
        <dbReference type="ChEBI" id="CHEBI:58045"/>
        <dbReference type="ChEBI" id="CHEBI:78442"/>
        <dbReference type="ChEBI" id="CHEBI:78528"/>
        <dbReference type="ChEBI" id="CHEBI:456215"/>
        <dbReference type="EC" id="6.1.1.5"/>
    </reaction>
</comment>
<comment type="cofactor">
    <cofactor evidence="1">
        <name>Zn(2+)</name>
        <dbReference type="ChEBI" id="CHEBI:29105"/>
    </cofactor>
    <text evidence="1">Binds 1 zinc ion per subunit.</text>
</comment>
<comment type="subunit">
    <text evidence="1">Monomer.</text>
</comment>
<comment type="subcellular location">
    <subcellularLocation>
        <location evidence="1">Cytoplasm</location>
    </subcellularLocation>
</comment>
<comment type="domain">
    <text evidence="1">IleRS has two distinct active sites: one for aminoacylation and one for editing. The misactivated valine is translocated from the active site to the editing site, which sterically excludes the correctly activated isoleucine. The single editing site contains two valyl binding pockets, one specific for each substrate (Val-AMP or Val-tRNA(Ile)).</text>
</comment>
<comment type="similarity">
    <text evidence="1">Belongs to the class-I aminoacyl-tRNA synthetase family. IleS type 1 subfamily.</text>
</comment>
<organism>
    <name type="scientific">Stenotrophomonas maltophilia (strain R551-3)</name>
    <dbReference type="NCBI Taxonomy" id="391008"/>
    <lineage>
        <taxon>Bacteria</taxon>
        <taxon>Pseudomonadati</taxon>
        <taxon>Pseudomonadota</taxon>
        <taxon>Gammaproteobacteria</taxon>
        <taxon>Lysobacterales</taxon>
        <taxon>Lysobacteraceae</taxon>
        <taxon>Stenotrophomonas</taxon>
        <taxon>Stenotrophomonas maltophilia group</taxon>
    </lineage>
</organism>
<gene>
    <name evidence="1" type="primary">ileS</name>
    <name type="ordered locus">Smal_1125</name>
</gene>
<accession>B4SP18</accession>
<evidence type="ECO:0000255" key="1">
    <source>
        <dbReference type="HAMAP-Rule" id="MF_02002"/>
    </source>
</evidence>
<keyword id="KW-0030">Aminoacyl-tRNA synthetase</keyword>
<keyword id="KW-0067">ATP-binding</keyword>
<keyword id="KW-0963">Cytoplasm</keyword>
<keyword id="KW-0436">Ligase</keyword>
<keyword id="KW-0479">Metal-binding</keyword>
<keyword id="KW-0547">Nucleotide-binding</keyword>
<keyword id="KW-0648">Protein biosynthesis</keyword>
<keyword id="KW-0862">Zinc</keyword>
<dbReference type="EC" id="6.1.1.5" evidence="1"/>
<dbReference type="EMBL" id="CP001111">
    <property type="protein sequence ID" value="ACF50830.1"/>
    <property type="molecule type" value="Genomic_DNA"/>
</dbReference>
<dbReference type="RefSeq" id="WP_012510415.1">
    <property type="nucleotide sequence ID" value="NC_011071.1"/>
</dbReference>
<dbReference type="SMR" id="B4SP18"/>
<dbReference type="STRING" id="391008.Smal_1125"/>
<dbReference type="KEGG" id="smt:Smal_1125"/>
<dbReference type="eggNOG" id="COG0060">
    <property type="taxonomic scope" value="Bacteria"/>
</dbReference>
<dbReference type="HOGENOM" id="CLU_001493_7_1_6"/>
<dbReference type="OrthoDB" id="9810365at2"/>
<dbReference type="Proteomes" id="UP000001867">
    <property type="component" value="Chromosome"/>
</dbReference>
<dbReference type="GO" id="GO:0005829">
    <property type="term" value="C:cytosol"/>
    <property type="evidence" value="ECO:0007669"/>
    <property type="project" value="TreeGrafter"/>
</dbReference>
<dbReference type="GO" id="GO:0002161">
    <property type="term" value="F:aminoacyl-tRNA deacylase activity"/>
    <property type="evidence" value="ECO:0007669"/>
    <property type="project" value="InterPro"/>
</dbReference>
<dbReference type="GO" id="GO:0005524">
    <property type="term" value="F:ATP binding"/>
    <property type="evidence" value="ECO:0007669"/>
    <property type="project" value="UniProtKB-UniRule"/>
</dbReference>
<dbReference type="GO" id="GO:0004822">
    <property type="term" value="F:isoleucine-tRNA ligase activity"/>
    <property type="evidence" value="ECO:0007669"/>
    <property type="project" value="UniProtKB-UniRule"/>
</dbReference>
<dbReference type="GO" id="GO:0000049">
    <property type="term" value="F:tRNA binding"/>
    <property type="evidence" value="ECO:0007669"/>
    <property type="project" value="InterPro"/>
</dbReference>
<dbReference type="GO" id="GO:0008270">
    <property type="term" value="F:zinc ion binding"/>
    <property type="evidence" value="ECO:0007669"/>
    <property type="project" value="UniProtKB-UniRule"/>
</dbReference>
<dbReference type="GO" id="GO:0006428">
    <property type="term" value="P:isoleucyl-tRNA aminoacylation"/>
    <property type="evidence" value="ECO:0007669"/>
    <property type="project" value="UniProtKB-UniRule"/>
</dbReference>
<dbReference type="CDD" id="cd07960">
    <property type="entry name" value="Anticodon_Ia_Ile_BEm"/>
    <property type="match status" value="1"/>
</dbReference>
<dbReference type="FunFam" id="1.10.730.20:FF:000001">
    <property type="entry name" value="Isoleucine--tRNA ligase"/>
    <property type="match status" value="1"/>
</dbReference>
<dbReference type="FunFam" id="3.40.50.620:FF:000042">
    <property type="entry name" value="Isoleucine--tRNA ligase"/>
    <property type="match status" value="1"/>
</dbReference>
<dbReference type="FunFam" id="3.40.50.620:FF:000048">
    <property type="entry name" value="Isoleucine--tRNA ligase"/>
    <property type="match status" value="1"/>
</dbReference>
<dbReference type="FunFam" id="3.90.740.10:FF:000022">
    <property type="entry name" value="Isoleucine--tRNA ligase"/>
    <property type="match status" value="1"/>
</dbReference>
<dbReference type="Gene3D" id="1.10.730.20">
    <property type="match status" value="1"/>
</dbReference>
<dbReference type="Gene3D" id="3.40.50.620">
    <property type="entry name" value="HUPs"/>
    <property type="match status" value="2"/>
</dbReference>
<dbReference type="Gene3D" id="1.10.10.830">
    <property type="entry name" value="Ile-tRNA synthetase CP2 domain-like"/>
    <property type="match status" value="1"/>
</dbReference>
<dbReference type="Gene3D" id="3.90.740.10">
    <property type="entry name" value="Valyl/Leucyl/Isoleucyl-tRNA synthetase, editing domain"/>
    <property type="match status" value="1"/>
</dbReference>
<dbReference type="HAMAP" id="MF_02002">
    <property type="entry name" value="Ile_tRNA_synth_type1"/>
    <property type="match status" value="1"/>
</dbReference>
<dbReference type="InterPro" id="IPR001412">
    <property type="entry name" value="aa-tRNA-synth_I_CS"/>
</dbReference>
<dbReference type="InterPro" id="IPR002300">
    <property type="entry name" value="aa-tRNA-synth_Ia"/>
</dbReference>
<dbReference type="InterPro" id="IPR033708">
    <property type="entry name" value="Anticodon_Ile_BEm"/>
</dbReference>
<dbReference type="InterPro" id="IPR002301">
    <property type="entry name" value="Ile-tRNA-ligase"/>
</dbReference>
<dbReference type="InterPro" id="IPR023585">
    <property type="entry name" value="Ile-tRNA-ligase_type1"/>
</dbReference>
<dbReference type="InterPro" id="IPR050081">
    <property type="entry name" value="Ile-tRNA_ligase"/>
</dbReference>
<dbReference type="InterPro" id="IPR013155">
    <property type="entry name" value="M/V/L/I-tRNA-synth_anticd-bd"/>
</dbReference>
<dbReference type="InterPro" id="IPR014729">
    <property type="entry name" value="Rossmann-like_a/b/a_fold"/>
</dbReference>
<dbReference type="InterPro" id="IPR009080">
    <property type="entry name" value="tRNAsynth_Ia_anticodon-bd"/>
</dbReference>
<dbReference type="InterPro" id="IPR009008">
    <property type="entry name" value="Val/Leu/Ile-tRNA-synth_edit"/>
</dbReference>
<dbReference type="InterPro" id="IPR010663">
    <property type="entry name" value="Znf_FPG/IleRS"/>
</dbReference>
<dbReference type="NCBIfam" id="TIGR00392">
    <property type="entry name" value="ileS"/>
    <property type="match status" value="1"/>
</dbReference>
<dbReference type="PANTHER" id="PTHR42765:SF1">
    <property type="entry name" value="ISOLEUCINE--TRNA LIGASE, MITOCHONDRIAL"/>
    <property type="match status" value="1"/>
</dbReference>
<dbReference type="PANTHER" id="PTHR42765">
    <property type="entry name" value="SOLEUCYL-TRNA SYNTHETASE"/>
    <property type="match status" value="1"/>
</dbReference>
<dbReference type="Pfam" id="PF08264">
    <property type="entry name" value="Anticodon_1"/>
    <property type="match status" value="1"/>
</dbReference>
<dbReference type="Pfam" id="PF00133">
    <property type="entry name" value="tRNA-synt_1"/>
    <property type="match status" value="1"/>
</dbReference>
<dbReference type="Pfam" id="PF06827">
    <property type="entry name" value="zf-FPG_IleRS"/>
    <property type="match status" value="1"/>
</dbReference>
<dbReference type="PRINTS" id="PR00984">
    <property type="entry name" value="TRNASYNTHILE"/>
</dbReference>
<dbReference type="SUPFAM" id="SSF47323">
    <property type="entry name" value="Anticodon-binding domain of a subclass of class I aminoacyl-tRNA synthetases"/>
    <property type="match status" value="1"/>
</dbReference>
<dbReference type="SUPFAM" id="SSF52374">
    <property type="entry name" value="Nucleotidylyl transferase"/>
    <property type="match status" value="1"/>
</dbReference>
<dbReference type="SUPFAM" id="SSF50677">
    <property type="entry name" value="ValRS/IleRS/LeuRS editing domain"/>
    <property type="match status" value="1"/>
</dbReference>
<dbReference type="PROSITE" id="PS00178">
    <property type="entry name" value="AA_TRNA_LIGASE_I"/>
    <property type="match status" value="1"/>
</dbReference>
<feature type="chain" id="PRO_1000189199" description="Isoleucine--tRNA ligase">
    <location>
        <begin position="1"/>
        <end position="943"/>
    </location>
</feature>
<feature type="short sequence motif" description="'HIGH' region">
    <location>
        <begin position="59"/>
        <end position="69"/>
    </location>
</feature>
<feature type="short sequence motif" description="'KMSKS' region">
    <location>
        <begin position="618"/>
        <end position="622"/>
    </location>
</feature>
<feature type="binding site" evidence="1">
    <location>
        <position position="577"/>
    </location>
    <ligand>
        <name>L-isoleucyl-5'-AMP</name>
        <dbReference type="ChEBI" id="CHEBI:178002"/>
    </ligand>
</feature>
<feature type="binding site" evidence="1">
    <location>
        <position position="621"/>
    </location>
    <ligand>
        <name>ATP</name>
        <dbReference type="ChEBI" id="CHEBI:30616"/>
    </ligand>
</feature>
<feature type="binding site" evidence="1">
    <location>
        <position position="906"/>
    </location>
    <ligand>
        <name>Zn(2+)</name>
        <dbReference type="ChEBI" id="CHEBI:29105"/>
    </ligand>
</feature>
<feature type="binding site" evidence="1">
    <location>
        <position position="909"/>
    </location>
    <ligand>
        <name>Zn(2+)</name>
        <dbReference type="ChEBI" id="CHEBI:29105"/>
    </ligand>
</feature>
<feature type="binding site" evidence="1">
    <location>
        <position position="926"/>
    </location>
    <ligand>
        <name>Zn(2+)</name>
        <dbReference type="ChEBI" id="CHEBI:29105"/>
    </ligand>
</feature>
<feature type="binding site" evidence="1">
    <location>
        <position position="929"/>
    </location>
    <ligand>
        <name>Zn(2+)</name>
        <dbReference type="ChEBI" id="CHEBI:29105"/>
    </ligand>
</feature>
<proteinExistence type="inferred from homology"/>
<reference key="1">
    <citation type="submission" date="2008-06" db="EMBL/GenBank/DDBJ databases">
        <title>Complete sequence of Stenotrophomonas maltophilia R551-3.</title>
        <authorList>
            <consortium name="US DOE Joint Genome Institute"/>
            <person name="Lucas S."/>
            <person name="Copeland A."/>
            <person name="Lapidus A."/>
            <person name="Glavina del Rio T."/>
            <person name="Dalin E."/>
            <person name="Tice H."/>
            <person name="Pitluck S."/>
            <person name="Chain P."/>
            <person name="Malfatti S."/>
            <person name="Shin M."/>
            <person name="Vergez L."/>
            <person name="Lang D."/>
            <person name="Schmutz J."/>
            <person name="Larimer F."/>
            <person name="Land M."/>
            <person name="Hauser L."/>
            <person name="Kyrpides N."/>
            <person name="Mikhailova N."/>
            <person name="Taghavi S."/>
            <person name="Monchy S."/>
            <person name="Newman L."/>
            <person name="Vangronsveld J."/>
            <person name="van der Lelie D."/>
            <person name="Richardson P."/>
        </authorList>
    </citation>
    <scope>NUCLEOTIDE SEQUENCE [LARGE SCALE GENOMIC DNA]</scope>
    <source>
        <strain>R551-3</strain>
    </source>
</reference>
<protein>
    <recommendedName>
        <fullName evidence="1">Isoleucine--tRNA ligase</fullName>
        <ecNumber evidence="1">6.1.1.5</ecNumber>
    </recommendedName>
    <alternativeName>
        <fullName evidence="1">Isoleucyl-tRNA synthetase</fullName>
        <shortName evidence="1">IleRS</shortName>
    </alternativeName>
</protein>
<sequence>MSQDYKTTLNLPATEFPMRGDLPKREPGILARWEEQGLYQQLRDNAAGRPLFVLHDGPPYANGRIHLGHAVNKILKDIIVKSRYLAGFDAPYVPGWDCHGLPIEIAVEKKWGKVGTKLDAVEFRQKCREFAEEQINIQRVDFKRLGVTGDWDNPYKTLSFDFEANEIRALAKVVANGHLVRGAKPVYWCFDCGSALAEAEIEYQEKESPAIDVAYAARDAQAIGQAFGVSVPADVEVAVPIWTTTPWTLPASLAVSLGAEINYVLAEGPAHNGKRRWLVLAAALAERALQRYGVEAVVLHGEADGSALENQLLAHPFYPEREILVLNGEHVSDEDGTGAVHTAPGHGQEDYVVSQKYGLLDKYNAGQVTPIDGRGVYLESTPPAGDVVLAGQHLWKAQEAIVGVLRDNGALLAFHPIRHSYPHCWRHKTPVVFRATPQWFISMDKANLRNDALAAIDTVGWFPSWGKARIQSMVDGRPDWTISRQRTWGVPIALFTHRQTGEIHPRSVELMQQVADRVEAEGIDVWYSLDAAELLGAEAADYEKVTDILDVWFDSGVTHEGVLAARGFGKPADLYLEGSDQHRGWFQSSLLTGVAIDKRAPYKQCLTHGFTVDEHGRKMSKSLGNGIEPQDIMNKLGADILRLWIASADYSNEMSLSQEILKRNADAYRRLRNTARFLLGNLDGFDPAQHLQPLDQMVALDRWIVHRAWELQEKIKAAYDGYNMAEIVQLLLNFCSVDLGSLYLDVTKDRLYTMPTDSSGRRSAQSAMYHIAEAFTRWVAPILTFTADELWGYLPGERAEHVLFTTWYDGLAPLPADAQLNAADFDQLLAVREQVAKVLEPMRANGAIGAALEAEITIAASEEQAARWQPLADELRFLFISGDVQVRPATTDEVFVSAQPTTKAKCVRCWHHRADVGSNADHPELCGRCVSNITGAGEVRSWF</sequence>